<comment type="function">
    <text evidence="1">Atypical chemokine receptor that controls chemokine levels and localization via high-affinity chemokine binding that is uncoupled from classic ligand-driven signal transduction cascades, resulting instead in chemokine sequestration, degradation, or transcytosis. Also known as interceptor (internalizing receptor) or chemokine-scavenging receptor or chemokine decoy receptor. Acts as a receptor for chemokines CCL2, CCL8, CCL13, CCL19, CCL21 and CCL25. Chemokine-binding does not activate G-protein-mediated signal transduction but instead induces beta-arrestin recruitment, leading to ligand internalization. Plays an important role in controlling the migration of immune and cancer cells that express chemokine receptors CCR7 and CCR9, by reducing the availability of CCL19, CCL21, and CCL25 through internalization. Negatively regulates CXCR3-induced chemotaxis. Regulates T-cell development in the thymus (By similarity).</text>
</comment>
<comment type="subunit">
    <text evidence="1">Forms heteromers with CXCR3. Interacts with ARRB1 and ARRB2 (By similarity).</text>
</comment>
<comment type="subcellular location">
    <subcellularLocation>
        <location evidence="1">Early endosome</location>
    </subcellularLocation>
    <subcellularLocation>
        <location evidence="1">Recycling endosome</location>
    </subcellularLocation>
    <subcellularLocation>
        <location evidence="1">Cell membrane</location>
        <topology evidence="1">Multi-pass membrane protein</topology>
    </subcellularLocation>
    <text evidence="1">Predominantly localizes to endocytic vesicles, and upon stimulation by the ligand is internalized via caveolae. Once internalized, the ligand dissociates from the receptor, and is targeted to degradation while the receptor is recycled back to the cell membrane (By similarity).</text>
</comment>
<comment type="tissue specificity">
    <text>Expressed in circumvallate and fungiform papillae, olfactory epithelium and lung. Lower expression in liver, kidney and tongue epithelium bearing no taste papillae. Very low expression in the cerebral cortex of the brain.</text>
</comment>
<comment type="PTM">
    <text evidence="1">The Ser/Thr residues in the C-terminal cytoplasmic tail may be phosphorylated.</text>
</comment>
<comment type="similarity">
    <text evidence="3">Belongs to the G-protein coupled receptor 1 family. Atypical chemokine receptor subfamily.</text>
</comment>
<proteinExistence type="evidence at transcript level"/>
<name>ACKR4_BOVIN</name>
<accession>P35350</accession>
<accession>A5PJM3</accession>
<reference key="1">
    <citation type="journal article" date="1993" name="Biochem. Biophys. Res. Commun.">
        <title>Identification of novel members of G-protein coupled receptor superfamily expressed in bovine taste tissue.</title>
        <authorList>
            <person name="Matsuoka I."/>
            <person name="Mori T."/>
            <person name="Aoki J."/>
            <person name="Sato T."/>
            <person name="Kurihara K."/>
        </authorList>
    </citation>
    <scope>NUCLEOTIDE SEQUENCE [MRNA]</scope>
    <source>
        <tissue>Tongue</tissue>
    </source>
</reference>
<reference key="2">
    <citation type="submission" date="2007-06" db="EMBL/GenBank/DDBJ databases">
        <authorList>
            <consortium name="NIH - Mammalian Gene Collection (MGC) project"/>
        </authorList>
    </citation>
    <scope>NUCLEOTIDE SEQUENCE [LARGE SCALE MRNA]</scope>
    <source>
        <strain>Hereford</strain>
        <tissue>Fetal muscle</tissue>
    </source>
</reference>
<protein>
    <recommendedName>
        <fullName>Atypical chemokine receptor 4</fullName>
    </recommendedName>
    <alternativeName>
        <fullName>C-C chemokine receptor type 11</fullName>
        <shortName>C-C CKR-11</shortName>
        <shortName>CC-CKR-11</shortName>
        <shortName>CCR-11</shortName>
    </alternativeName>
    <alternativeName>
        <fullName>CC chemokine receptor-like 1</fullName>
    </alternativeName>
    <alternativeName>
        <fullName>Protein PPR1</fullName>
    </alternativeName>
    <alternativeName>
        <fullName>Putative gustatory receptor type B</fullName>
    </alternativeName>
</protein>
<sequence length="350" mass="40008">MAVEYNQSTDYYYEENEMNDTHDYSQYEVICIKEEVRKFAKVFLPAFFTIAFIIGLAGNSTVVAIYAYYKKRRTKTDVYILNLAVADLFLLFTLPFWAVNAVHGWVLGKIMCKVTSALYTVNFVSGMQFLACISTDRYWAVTKAPSQSGVGKPCWVICFCVWVAAILLSIPQLVFYTVNHKARCVPIFPYHLGTSMKASIQILEICIGFIIPFLIMAVCYFITAKTLIKMPNIKKSQPLKVLFTVVIVFIVTQLPYNIVKFCQAIDIIYSLITDCDMSKRMDVAIQITESIALFHSCLNPVLYVFMGTSFKNYIMKVAKKYGSWRRQRQNVEEIPFESEDATEPTSTFSI</sequence>
<evidence type="ECO:0000250" key="1"/>
<evidence type="ECO:0000255" key="2"/>
<evidence type="ECO:0000255" key="3">
    <source>
        <dbReference type="PROSITE-ProRule" id="PRU00521"/>
    </source>
</evidence>
<feature type="chain" id="PRO_0000069295" description="Atypical chemokine receptor 4">
    <location>
        <begin position="1"/>
        <end position="350"/>
    </location>
</feature>
<feature type="topological domain" description="Extracellular" evidence="2">
    <location>
        <begin position="1"/>
        <end position="41"/>
    </location>
</feature>
<feature type="transmembrane region" description="Helical; Name=1" evidence="2">
    <location>
        <begin position="42"/>
        <end position="66"/>
    </location>
</feature>
<feature type="topological domain" description="Cytoplasmic" evidence="2">
    <location>
        <begin position="67"/>
        <end position="79"/>
    </location>
</feature>
<feature type="transmembrane region" description="Helical; Name=2" evidence="2">
    <location>
        <begin position="80"/>
        <end position="99"/>
    </location>
</feature>
<feature type="topological domain" description="Extracellular" evidence="2">
    <location>
        <begin position="100"/>
        <end position="113"/>
    </location>
</feature>
<feature type="transmembrane region" description="Helical; Name=3" evidence="2">
    <location>
        <begin position="114"/>
        <end position="135"/>
    </location>
</feature>
<feature type="topological domain" description="Cytoplasmic" evidence="2">
    <location>
        <begin position="136"/>
        <end position="153"/>
    </location>
</feature>
<feature type="transmembrane region" description="Helical; Name=4" evidence="2">
    <location>
        <begin position="154"/>
        <end position="175"/>
    </location>
</feature>
<feature type="topological domain" description="Extracellular" evidence="2">
    <location>
        <begin position="176"/>
        <end position="199"/>
    </location>
</feature>
<feature type="transmembrane region" description="Helical; Name=5" evidence="2">
    <location>
        <begin position="200"/>
        <end position="222"/>
    </location>
</feature>
<feature type="topological domain" description="Cytoplasmic" evidence="2">
    <location>
        <begin position="223"/>
        <end position="241"/>
    </location>
</feature>
<feature type="transmembrane region" description="Helical; Name=6" evidence="2">
    <location>
        <begin position="242"/>
        <end position="265"/>
    </location>
</feature>
<feature type="topological domain" description="Extracellular" evidence="2">
    <location>
        <begin position="266"/>
        <end position="283"/>
    </location>
</feature>
<feature type="transmembrane region" description="Helical; Name=7" evidence="2">
    <location>
        <begin position="284"/>
        <end position="306"/>
    </location>
</feature>
<feature type="topological domain" description="Cytoplasmic" evidence="2">
    <location>
        <begin position="307"/>
        <end position="350"/>
    </location>
</feature>
<feature type="glycosylation site" description="N-linked (GlcNAc...) asparagine" evidence="2">
    <location>
        <position position="6"/>
    </location>
</feature>
<feature type="glycosylation site" description="N-linked (GlcNAc...) asparagine" evidence="2">
    <location>
        <position position="19"/>
    </location>
</feature>
<feature type="disulfide bond" evidence="3">
    <location>
        <begin position="112"/>
        <end position="184"/>
    </location>
</feature>
<gene>
    <name type="primary">ACKR4</name>
    <name type="synonym">CCR11</name>
    <name type="synonym">CCRL1</name>
</gene>
<dbReference type="EMBL" id="S63848">
    <property type="protein sequence ID" value="AAB27547.1"/>
    <property type="molecule type" value="mRNA"/>
</dbReference>
<dbReference type="EMBL" id="BC142169">
    <property type="protein sequence ID" value="AAI42170.1"/>
    <property type="molecule type" value="mRNA"/>
</dbReference>
<dbReference type="PIR" id="JN0621">
    <property type="entry name" value="JN0621"/>
</dbReference>
<dbReference type="RefSeq" id="NP_776690.1">
    <property type="nucleotide sequence ID" value="NM_174265.2"/>
</dbReference>
<dbReference type="RefSeq" id="XP_015328974.1">
    <property type="nucleotide sequence ID" value="XM_015473488.3"/>
</dbReference>
<dbReference type="SMR" id="P35350"/>
<dbReference type="FunCoup" id="P35350">
    <property type="interactions" value="48"/>
</dbReference>
<dbReference type="STRING" id="9913.ENSBTAP00000026082"/>
<dbReference type="GlyCosmos" id="P35350">
    <property type="glycosylation" value="2 sites, No reported glycans"/>
</dbReference>
<dbReference type="GlyGen" id="P35350">
    <property type="glycosylation" value="2 sites"/>
</dbReference>
<dbReference type="PaxDb" id="9913-ENSBTAP00000026082"/>
<dbReference type="Ensembl" id="ENSBTAT00000026082.6">
    <property type="protein sequence ID" value="ENSBTAP00000026082.4"/>
    <property type="gene ID" value="ENSBTAG00000019577.6"/>
</dbReference>
<dbReference type="Ensembl" id="ENSBTAT00000105383.1">
    <property type="protein sequence ID" value="ENSBTAP00000098569.1"/>
    <property type="gene ID" value="ENSBTAG00000019577.6"/>
</dbReference>
<dbReference type="Ensembl" id="ENSBTAT00000118829.1">
    <property type="protein sequence ID" value="ENSBTAP00000093189.1"/>
    <property type="gene ID" value="ENSBTAG00000019577.6"/>
</dbReference>
<dbReference type="GeneID" id="281672"/>
<dbReference type="KEGG" id="bta:281672"/>
<dbReference type="CTD" id="51554"/>
<dbReference type="VEuPathDB" id="HostDB:ENSBTAG00000019577"/>
<dbReference type="VGNC" id="VGNC:25542">
    <property type="gene designation" value="ACKR4"/>
</dbReference>
<dbReference type="eggNOG" id="KOG3656">
    <property type="taxonomic scope" value="Eukaryota"/>
</dbReference>
<dbReference type="GeneTree" id="ENSGT01030000234667"/>
<dbReference type="HOGENOM" id="CLU_009579_8_3_1"/>
<dbReference type="InParanoid" id="P35350"/>
<dbReference type="OMA" id="YNVVKLC"/>
<dbReference type="OrthoDB" id="9874829at2759"/>
<dbReference type="TreeFam" id="TF330966"/>
<dbReference type="Reactome" id="R-BTA-380108">
    <property type="pathway name" value="Chemokine receptors bind chemokines"/>
</dbReference>
<dbReference type="Proteomes" id="UP000009136">
    <property type="component" value="Chromosome 1"/>
</dbReference>
<dbReference type="Bgee" id="ENSBTAG00000019577">
    <property type="expression patterns" value="Expressed in tongue muscle and 78 other cell types or tissues"/>
</dbReference>
<dbReference type="GO" id="GO:0005769">
    <property type="term" value="C:early endosome"/>
    <property type="evidence" value="ECO:0007669"/>
    <property type="project" value="UniProtKB-SubCell"/>
</dbReference>
<dbReference type="GO" id="GO:0009897">
    <property type="term" value="C:external side of plasma membrane"/>
    <property type="evidence" value="ECO:0000318"/>
    <property type="project" value="GO_Central"/>
</dbReference>
<dbReference type="GO" id="GO:0055037">
    <property type="term" value="C:recycling endosome"/>
    <property type="evidence" value="ECO:0007669"/>
    <property type="project" value="UniProtKB-SubCell"/>
</dbReference>
<dbReference type="GO" id="GO:0019957">
    <property type="term" value="F:C-C chemokine binding"/>
    <property type="evidence" value="ECO:0000318"/>
    <property type="project" value="GO_Central"/>
</dbReference>
<dbReference type="GO" id="GO:0016493">
    <property type="term" value="F:C-C chemokine receptor activity"/>
    <property type="evidence" value="ECO:0000318"/>
    <property type="project" value="GO_Central"/>
</dbReference>
<dbReference type="GO" id="GO:0004950">
    <property type="term" value="F:chemokine receptor activity"/>
    <property type="evidence" value="ECO:0000250"/>
    <property type="project" value="UniProtKB"/>
</dbReference>
<dbReference type="GO" id="GO:0005044">
    <property type="term" value="F:scavenger receptor activity"/>
    <property type="evidence" value="ECO:0007669"/>
    <property type="project" value="InterPro"/>
</dbReference>
<dbReference type="GO" id="GO:0019722">
    <property type="term" value="P:calcium-mediated signaling"/>
    <property type="evidence" value="ECO:0000318"/>
    <property type="project" value="GO_Central"/>
</dbReference>
<dbReference type="GO" id="GO:0060326">
    <property type="term" value="P:cell chemotaxis"/>
    <property type="evidence" value="ECO:0000318"/>
    <property type="project" value="GO_Central"/>
</dbReference>
<dbReference type="GO" id="GO:0006955">
    <property type="term" value="P:immune response"/>
    <property type="evidence" value="ECO:0000318"/>
    <property type="project" value="GO_Central"/>
</dbReference>
<dbReference type="GO" id="GO:0007204">
    <property type="term" value="P:positive regulation of cytosolic calcium ion concentration"/>
    <property type="evidence" value="ECO:0000318"/>
    <property type="project" value="GO_Central"/>
</dbReference>
<dbReference type="CDD" id="cd15176">
    <property type="entry name" value="7tmA_ACKR4_CCR11"/>
    <property type="match status" value="1"/>
</dbReference>
<dbReference type="FunFam" id="1.20.1070.10:FF:000035">
    <property type="entry name" value="C-C chemokine receptor type 6"/>
    <property type="match status" value="1"/>
</dbReference>
<dbReference type="Gene3D" id="1.20.1070.10">
    <property type="entry name" value="Rhodopsin 7-helix transmembrane proteins"/>
    <property type="match status" value="1"/>
</dbReference>
<dbReference type="InterPro" id="IPR005383">
    <property type="entry name" value="ACKR4"/>
</dbReference>
<dbReference type="InterPro" id="IPR050119">
    <property type="entry name" value="CCR1-9-like"/>
</dbReference>
<dbReference type="InterPro" id="IPR000355">
    <property type="entry name" value="Chemokine_rcpt"/>
</dbReference>
<dbReference type="InterPro" id="IPR000276">
    <property type="entry name" value="GPCR_Rhodpsn"/>
</dbReference>
<dbReference type="InterPro" id="IPR017452">
    <property type="entry name" value="GPCR_Rhodpsn_7TM"/>
</dbReference>
<dbReference type="PANTHER" id="PTHR10489:SF733">
    <property type="entry name" value="ATYPICAL CHEMOKINE RECEPTOR 4"/>
    <property type="match status" value="1"/>
</dbReference>
<dbReference type="PANTHER" id="PTHR10489">
    <property type="entry name" value="CELL ADHESION MOLECULE"/>
    <property type="match status" value="1"/>
</dbReference>
<dbReference type="Pfam" id="PF00001">
    <property type="entry name" value="7tm_1"/>
    <property type="match status" value="1"/>
</dbReference>
<dbReference type="PRINTS" id="PR00657">
    <property type="entry name" value="CCCHEMOKINER"/>
</dbReference>
<dbReference type="PRINTS" id="PR01558">
    <property type="entry name" value="CHEMOKINER11"/>
</dbReference>
<dbReference type="PRINTS" id="PR00237">
    <property type="entry name" value="GPCRRHODOPSN"/>
</dbReference>
<dbReference type="SUPFAM" id="SSF81321">
    <property type="entry name" value="Family A G protein-coupled receptor-like"/>
    <property type="match status" value="1"/>
</dbReference>
<dbReference type="PROSITE" id="PS00237">
    <property type="entry name" value="G_PROTEIN_RECEP_F1_1"/>
    <property type="match status" value="1"/>
</dbReference>
<dbReference type="PROSITE" id="PS50262">
    <property type="entry name" value="G_PROTEIN_RECEP_F1_2"/>
    <property type="match status" value="1"/>
</dbReference>
<organism>
    <name type="scientific">Bos taurus</name>
    <name type="common">Bovine</name>
    <dbReference type="NCBI Taxonomy" id="9913"/>
    <lineage>
        <taxon>Eukaryota</taxon>
        <taxon>Metazoa</taxon>
        <taxon>Chordata</taxon>
        <taxon>Craniata</taxon>
        <taxon>Vertebrata</taxon>
        <taxon>Euteleostomi</taxon>
        <taxon>Mammalia</taxon>
        <taxon>Eutheria</taxon>
        <taxon>Laurasiatheria</taxon>
        <taxon>Artiodactyla</taxon>
        <taxon>Ruminantia</taxon>
        <taxon>Pecora</taxon>
        <taxon>Bovidae</taxon>
        <taxon>Bovinae</taxon>
        <taxon>Bos</taxon>
    </lineage>
</organism>
<keyword id="KW-1003">Cell membrane</keyword>
<keyword id="KW-1015">Disulfide bond</keyword>
<keyword id="KW-0967">Endosome</keyword>
<keyword id="KW-0297">G-protein coupled receptor</keyword>
<keyword id="KW-0325">Glycoprotein</keyword>
<keyword id="KW-0472">Membrane</keyword>
<keyword id="KW-0597">Phosphoprotein</keyword>
<keyword id="KW-0675">Receptor</keyword>
<keyword id="KW-1185">Reference proteome</keyword>
<keyword id="KW-0807">Transducer</keyword>
<keyword id="KW-0812">Transmembrane</keyword>
<keyword id="KW-1133">Transmembrane helix</keyword>